<feature type="initiator methionine" description="Removed" evidence="10 14">
    <location>
        <position position="1"/>
    </location>
</feature>
<feature type="chain" id="PRO_0000118734" description="NADH dehydrogenase [ubiquinone] 1 alpha subcomplex subunit 8">
    <location>
        <begin position="2"/>
        <end position="172"/>
    </location>
</feature>
<feature type="domain" description="CHCH 1" evidence="1">
    <location>
        <begin position="33"/>
        <end position="74"/>
    </location>
</feature>
<feature type="domain" description="CHCH 2" evidence="1">
    <location>
        <begin position="75"/>
        <end position="118"/>
    </location>
</feature>
<feature type="region of interest" description="Disordered" evidence="2">
    <location>
        <begin position="133"/>
        <end position="164"/>
    </location>
</feature>
<feature type="short sequence motif" description="Cx9C motif 1" evidence="1">
    <location>
        <begin position="36"/>
        <end position="46"/>
    </location>
</feature>
<feature type="short sequence motif" description="Cx9C motif 2" evidence="1">
    <location>
        <begin position="56"/>
        <end position="66"/>
    </location>
</feature>
<feature type="short sequence motif" description="Cx9C motif 3" evidence="1">
    <location>
        <begin position="78"/>
        <end position="88"/>
    </location>
</feature>
<feature type="short sequence motif" description="Cx9C motif 4" evidence="1">
    <location>
        <begin position="100"/>
        <end position="110"/>
    </location>
</feature>
<feature type="disulfide bond" evidence="1 13">
    <location>
        <begin position="36"/>
        <end position="66"/>
    </location>
</feature>
<feature type="disulfide bond" evidence="1 13">
    <location>
        <begin position="46"/>
        <end position="56"/>
    </location>
</feature>
<feature type="disulfide bond" evidence="1 13">
    <location>
        <begin position="78"/>
        <end position="110"/>
    </location>
</feature>
<feature type="disulfide bond" evidence="1 13">
    <location>
        <begin position="88"/>
        <end position="100"/>
    </location>
</feature>
<feature type="sequence variant" id="VAR_085554" description="In MC1DN37; reduced enzymatic activity of the respiratory chain complex I; reduced NDUFA8 protein levels; decrease in respiratory supercomplexes comprising complex I (CI/CIII 2/CIV and CI/CIII 2) as well as an increase in unintegrated complex III dimers; dbSNP:rs767864225." evidence="8">
    <original>R</original>
    <variation>C</variation>
    <location>
        <position position="47"/>
    </location>
</feature>
<feature type="sequence variant" id="VAR_085555" description="In MC1DN37; defect in the assembly of respiratory chain complex I; reduced enzymatic activity of the respiratory chain complex I; altered fibroblast mitochondria morphology and reduced mitochondrial network branching; no significant differences in mitochondrial respiratory capacity; dbSNP:rs1319414797." evidence="9">
    <original>R</original>
    <variation>L</variation>
    <location>
        <position position="98"/>
    </location>
</feature>
<feature type="sequence variant" id="VAR_036176" description="In a breast cancer sample; somatic mutation." evidence="4">
    <original>N</original>
    <variation>H</variation>
    <location>
        <position position="140"/>
    </location>
</feature>
<name>NDUA8_HUMAN</name>
<keyword id="KW-0002">3D-structure</keyword>
<keyword id="KW-0903">Direct protein sequencing</keyword>
<keyword id="KW-0225">Disease variant</keyword>
<keyword id="KW-1015">Disulfide bond</keyword>
<keyword id="KW-0249">Electron transport</keyword>
<keyword id="KW-0472">Membrane</keyword>
<keyword id="KW-0496">Mitochondrion</keyword>
<keyword id="KW-0999">Mitochondrion inner membrane</keyword>
<keyword id="KW-1274">Primary mitochondrial disease</keyword>
<keyword id="KW-1267">Proteomics identification</keyword>
<keyword id="KW-1185">Reference proteome</keyword>
<keyword id="KW-0677">Repeat</keyword>
<keyword id="KW-0679">Respiratory chain</keyword>
<keyword id="KW-0813">Transport</keyword>
<proteinExistence type="evidence at protein level"/>
<reference key="1">
    <citation type="journal article" date="1998" name="Hum. Genet.">
        <title>The nuclear-encoded human NADH:ubiquinone oxidoreductase NDUFA8 subunit: cDNA cloning, chromosomal localization, tissue distribution, and mutation detection in complex-I-deficient patients.</title>
        <authorList>
            <person name="Triepels R."/>
            <person name="van den Heuvel L."/>
            <person name="Loeffen J."/>
            <person name="Smeets R."/>
            <person name="Trijbels F."/>
            <person name="Smeitink J."/>
        </authorList>
    </citation>
    <scope>NUCLEOTIDE SEQUENCE [MRNA]</scope>
</reference>
<reference key="2">
    <citation type="journal article" date="2004" name="Nat. Genet.">
        <title>Complete sequencing and characterization of 21,243 full-length human cDNAs.</title>
        <authorList>
            <person name="Ota T."/>
            <person name="Suzuki Y."/>
            <person name="Nishikawa T."/>
            <person name="Otsuki T."/>
            <person name="Sugiyama T."/>
            <person name="Irie R."/>
            <person name="Wakamatsu A."/>
            <person name="Hayashi K."/>
            <person name="Sato H."/>
            <person name="Nagai K."/>
            <person name="Kimura K."/>
            <person name="Makita H."/>
            <person name="Sekine M."/>
            <person name="Obayashi M."/>
            <person name="Nishi T."/>
            <person name="Shibahara T."/>
            <person name="Tanaka T."/>
            <person name="Ishii S."/>
            <person name="Yamamoto J."/>
            <person name="Saito K."/>
            <person name="Kawai Y."/>
            <person name="Isono Y."/>
            <person name="Nakamura Y."/>
            <person name="Nagahari K."/>
            <person name="Murakami K."/>
            <person name="Yasuda T."/>
            <person name="Iwayanagi T."/>
            <person name="Wagatsuma M."/>
            <person name="Shiratori A."/>
            <person name="Sudo H."/>
            <person name="Hosoiri T."/>
            <person name="Kaku Y."/>
            <person name="Kodaira H."/>
            <person name="Kondo H."/>
            <person name="Sugawara M."/>
            <person name="Takahashi M."/>
            <person name="Kanda K."/>
            <person name="Yokoi T."/>
            <person name="Furuya T."/>
            <person name="Kikkawa E."/>
            <person name="Omura Y."/>
            <person name="Abe K."/>
            <person name="Kamihara K."/>
            <person name="Katsuta N."/>
            <person name="Sato K."/>
            <person name="Tanikawa M."/>
            <person name="Yamazaki M."/>
            <person name="Ninomiya K."/>
            <person name="Ishibashi T."/>
            <person name="Yamashita H."/>
            <person name="Murakawa K."/>
            <person name="Fujimori K."/>
            <person name="Tanai H."/>
            <person name="Kimata M."/>
            <person name="Watanabe M."/>
            <person name="Hiraoka S."/>
            <person name="Chiba Y."/>
            <person name="Ishida S."/>
            <person name="Ono Y."/>
            <person name="Takiguchi S."/>
            <person name="Watanabe S."/>
            <person name="Yosida M."/>
            <person name="Hotuta T."/>
            <person name="Kusano J."/>
            <person name="Kanehori K."/>
            <person name="Takahashi-Fujii A."/>
            <person name="Hara H."/>
            <person name="Tanase T.-O."/>
            <person name="Nomura Y."/>
            <person name="Togiya S."/>
            <person name="Komai F."/>
            <person name="Hara R."/>
            <person name="Takeuchi K."/>
            <person name="Arita M."/>
            <person name="Imose N."/>
            <person name="Musashino K."/>
            <person name="Yuuki H."/>
            <person name="Oshima A."/>
            <person name="Sasaki N."/>
            <person name="Aotsuka S."/>
            <person name="Yoshikawa Y."/>
            <person name="Matsunawa H."/>
            <person name="Ichihara T."/>
            <person name="Shiohata N."/>
            <person name="Sano S."/>
            <person name="Moriya S."/>
            <person name="Momiyama H."/>
            <person name="Satoh N."/>
            <person name="Takami S."/>
            <person name="Terashima Y."/>
            <person name="Suzuki O."/>
            <person name="Nakagawa S."/>
            <person name="Senoh A."/>
            <person name="Mizoguchi H."/>
            <person name="Goto Y."/>
            <person name="Shimizu F."/>
            <person name="Wakebe H."/>
            <person name="Hishigaki H."/>
            <person name="Watanabe T."/>
            <person name="Sugiyama A."/>
            <person name="Takemoto M."/>
            <person name="Kawakami B."/>
            <person name="Yamazaki M."/>
            <person name="Watanabe K."/>
            <person name="Kumagai A."/>
            <person name="Itakura S."/>
            <person name="Fukuzumi Y."/>
            <person name="Fujimori Y."/>
            <person name="Komiyama M."/>
            <person name="Tashiro H."/>
            <person name="Tanigami A."/>
            <person name="Fujiwara T."/>
            <person name="Ono T."/>
            <person name="Yamada K."/>
            <person name="Fujii Y."/>
            <person name="Ozaki K."/>
            <person name="Hirao M."/>
            <person name="Ohmori Y."/>
            <person name="Kawabata A."/>
            <person name="Hikiji T."/>
            <person name="Kobatake N."/>
            <person name="Inagaki H."/>
            <person name="Ikema Y."/>
            <person name="Okamoto S."/>
            <person name="Okitani R."/>
            <person name="Kawakami T."/>
            <person name="Noguchi S."/>
            <person name="Itoh T."/>
            <person name="Shigeta K."/>
            <person name="Senba T."/>
            <person name="Matsumura K."/>
            <person name="Nakajima Y."/>
            <person name="Mizuno T."/>
            <person name="Morinaga M."/>
            <person name="Sasaki M."/>
            <person name="Togashi T."/>
            <person name="Oyama M."/>
            <person name="Hata H."/>
            <person name="Watanabe M."/>
            <person name="Komatsu T."/>
            <person name="Mizushima-Sugano J."/>
            <person name="Satoh T."/>
            <person name="Shirai Y."/>
            <person name="Takahashi Y."/>
            <person name="Nakagawa K."/>
            <person name="Okumura K."/>
            <person name="Nagase T."/>
            <person name="Nomura N."/>
            <person name="Kikuchi H."/>
            <person name="Masuho Y."/>
            <person name="Yamashita R."/>
            <person name="Nakai K."/>
            <person name="Yada T."/>
            <person name="Nakamura Y."/>
            <person name="Ohara O."/>
            <person name="Isogai T."/>
            <person name="Sugano S."/>
        </authorList>
    </citation>
    <scope>NUCLEOTIDE SEQUENCE [LARGE SCALE MRNA]</scope>
    <source>
        <tissue>Thalamus</tissue>
    </source>
</reference>
<reference key="3">
    <citation type="journal article" date="2004" name="Nature">
        <title>DNA sequence and analysis of human chromosome 9.</title>
        <authorList>
            <person name="Humphray S.J."/>
            <person name="Oliver K."/>
            <person name="Hunt A.R."/>
            <person name="Plumb R.W."/>
            <person name="Loveland J.E."/>
            <person name="Howe K.L."/>
            <person name="Andrews T.D."/>
            <person name="Searle S."/>
            <person name="Hunt S.E."/>
            <person name="Scott C.E."/>
            <person name="Jones M.C."/>
            <person name="Ainscough R."/>
            <person name="Almeida J.P."/>
            <person name="Ambrose K.D."/>
            <person name="Ashwell R.I.S."/>
            <person name="Babbage A.K."/>
            <person name="Babbage S."/>
            <person name="Bagguley C.L."/>
            <person name="Bailey J."/>
            <person name="Banerjee R."/>
            <person name="Barker D.J."/>
            <person name="Barlow K.F."/>
            <person name="Bates K."/>
            <person name="Beasley H."/>
            <person name="Beasley O."/>
            <person name="Bird C.P."/>
            <person name="Bray-Allen S."/>
            <person name="Brown A.J."/>
            <person name="Brown J.Y."/>
            <person name="Burford D."/>
            <person name="Burrill W."/>
            <person name="Burton J."/>
            <person name="Carder C."/>
            <person name="Carter N.P."/>
            <person name="Chapman J.C."/>
            <person name="Chen Y."/>
            <person name="Clarke G."/>
            <person name="Clark S.Y."/>
            <person name="Clee C.M."/>
            <person name="Clegg S."/>
            <person name="Collier R.E."/>
            <person name="Corby N."/>
            <person name="Crosier M."/>
            <person name="Cummings A.T."/>
            <person name="Davies J."/>
            <person name="Dhami P."/>
            <person name="Dunn M."/>
            <person name="Dutta I."/>
            <person name="Dyer L.W."/>
            <person name="Earthrowl M.E."/>
            <person name="Faulkner L."/>
            <person name="Fleming C.J."/>
            <person name="Frankish A."/>
            <person name="Frankland J.A."/>
            <person name="French L."/>
            <person name="Fricker D.G."/>
            <person name="Garner P."/>
            <person name="Garnett J."/>
            <person name="Ghori J."/>
            <person name="Gilbert J.G.R."/>
            <person name="Glison C."/>
            <person name="Grafham D.V."/>
            <person name="Gribble S."/>
            <person name="Griffiths C."/>
            <person name="Griffiths-Jones S."/>
            <person name="Grocock R."/>
            <person name="Guy J."/>
            <person name="Hall R.E."/>
            <person name="Hammond S."/>
            <person name="Harley J.L."/>
            <person name="Harrison E.S.I."/>
            <person name="Hart E.A."/>
            <person name="Heath P.D."/>
            <person name="Henderson C.D."/>
            <person name="Hopkins B.L."/>
            <person name="Howard P.J."/>
            <person name="Howden P.J."/>
            <person name="Huckle E."/>
            <person name="Johnson C."/>
            <person name="Johnson D."/>
            <person name="Joy A.A."/>
            <person name="Kay M."/>
            <person name="Keenan S."/>
            <person name="Kershaw J.K."/>
            <person name="Kimberley A.M."/>
            <person name="King A."/>
            <person name="Knights A."/>
            <person name="Laird G.K."/>
            <person name="Langford C."/>
            <person name="Lawlor S."/>
            <person name="Leongamornlert D.A."/>
            <person name="Leversha M."/>
            <person name="Lloyd C."/>
            <person name="Lloyd D.M."/>
            <person name="Lovell J."/>
            <person name="Martin S."/>
            <person name="Mashreghi-Mohammadi M."/>
            <person name="Matthews L."/>
            <person name="McLaren S."/>
            <person name="McLay K.E."/>
            <person name="McMurray A."/>
            <person name="Milne S."/>
            <person name="Nickerson T."/>
            <person name="Nisbett J."/>
            <person name="Nordsiek G."/>
            <person name="Pearce A.V."/>
            <person name="Peck A.I."/>
            <person name="Porter K.M."/>
            <person name="Pandian R."/>
            <person name="Pelan S."/>
            <person name="Phillimore B."/>
            <person name="Povey S."/>
            <person name="Ramsey Y."/>
            <person name="Rand V."/>
            <person name="Scharfe M."/>
            <person name="Sehra H.K."/>
            <person name="Shownkeen R."/>
            <person name="Sims S.K."/>
            <person name="Skuce C.D."/>
            <person name="Smith M."/>
            <person name="Steward C.A."/>
            <person name="Swarbreck D."/>
            <person name="Sycamore N."/>
            <person name="Tester J."/>
            <person name="Thorpe A."/>
            <person name="Tracey A."/>
            <person name="Tromans A."/>
            <person name="Thomas D.W."/>
            <person name="Wall M."/>
            <person name="Wallis J.M."/>
            <person name="West A.P."/>
            <person name="Whitehead S.L."/>
            <person name="Willey D.L."/>
            <person name="Williams S.A."/>
            <person name="Wilming L."/>
            <person name="Wray P.W."/>
            <person name="Young L."/>
            <person name="Ashurst J.L."/>
            <person name="Coulson A."/>
            <person name="Blocker H."/>
            <person name="Durbin R.M."/>
            <person name="Sulston J.E."/>
            <person name="Hubbard T."/>
            <person name="Jackson M.J."/>
            <person name="Bentley D.R."/>
            <person name="Beck S."/>
            <person name="Rogers J."/>
            <person name="Dunham I."/>
        </authorList>
    </citation>
    <scope>NUCLEOTIDE SEQUENCE [LARGE SCALE GENOMIC DNA]</scope>
</reference>
<reference key="4">
    <citation type="submission" date="2005-07" db="EMBL/GenBank/DDBJ databases">
        <authorList>
            <person name="Mural R.J."/>
            <person name="Istrail S."/>
            <person name="Sutton G."/>
            <person name="Florea L."/>
            <person name="Halpern A.L."/>
            <person name="Mobarry C.M."/>
            <person name="Lippert R."/>
            <person name="Walenz B."/>
            <person name="Shatkay H."/>
            <person name="Dew I."/>
            <person name="Miller J.R."/>
            <person name="Flanigan M.J."/>
            <person name="Edwards N.J."/>
            <person name="Bolanos R."/>
            <person name="Fasulo D."/>
            <person name="Halldorsson B.V."/>
            <person name="Hannenhalli S."/>
            <person name="Turner R."/>
            <person name="Yooseph S."/>
            <person name="Lu F."/>
            <person name="Nusskern D.R."/>
            <person name="Shue B.C."/>
            <person name="Zheng X.H."/>
            <person name="Zhong F."/>
            <person name="Delcher A.L."/>
            <person name="Huson D.H."/>
            <person name="Kravitz S.A."/>
            <person name="Mouchard L."/>
            <person name="Reinert K."/>
            <person name="Remington K.A."/>
            <person name="Clark A.G."/>
            <person name="Waterman M.S."/>
            <person name="Eichler E.E."/>
            <person name="Adams M.D."/>
            <person name="Hunkapiller M.W."/>
            <person name="Myers E.W."/>
            <person name="Venter J.C."/>
        </authorList>
    </citation>
    <scope>NUCLEOTIDE SEQUENCE [LARGE SCALE GENOMIC DNA]</scope>
</reference>
<reference key="5">
    <citation type="journal article" date="2004" name="Genome Res.">
        <title>The status, quality, and expansion of the NIH full-length cDNA project: the Mammalian Gene Collection (MGC).</title>
        <authorList>
            <consortium name="The MGC Project Team"/>
        </authorList>
    </citation>
    <scope>NUCLEOTIDE SEQUENCE [LARGE SCALE MRNA]</scope>
    <source>
        <tissue>Lymph</tissue>
    </source>
</reference>
<reference key="6">
    <citation type="journal article" date="1997" name="Electrophoresis">
        <title>Renal cell carcinoma and normal kidney protein expression.</title>
        <authorList>
            <person name="Sarto C."/>
            <person name="Marocchi A."/>
            <person name="Sanchez J.-C."/>
            <person name="Giannone B."/>
            <person name="Frutiger S."/>
            <person name="Golaz O."/>
            <person name="Wilkins M.R."/>
            <person name="Doro G."/>
            <person name="Cappellano F."/>
            <person name="Hughes G.J."/>
            <person name="Hochstrasser D.F."/>
            <person name="Mocarelli P."/>
        </authorList>
    </citation>
    <scope>PROTEIN SEQUENCE OF 2-14</scope>
    <source>
        <tissue>Kidney</tissue>
    </source>
</reference>
<reference key="7">
    <citation type="journal article" date="2003" name="J. Biol. Chem.">
        <title>The subunit composition of the human NADH dehydrogenase obtained by rapid one-step immunopurification.</title>
        <authorList>
            <person name="Murray J."/>
            <person name="Zhang B."/>
            <person name="Taylor S.W."/>
            <person name="Oglesbee D."/>
            <person name="Fahy E."/>
            <person name="Marusich M.F."/>
            <person name="Ghosh S.S."/>
            <person name="Capaldi R.A."/>
        </authorList>
    </citation>
    <scope>IDENTIFICATION IN THE NADH-UBIQUINONE OXIDOREDUCTASE COMPLEX</scope>
    <scope>IDENTIFICATION BY MASS SPECTROMETRY</scope>
</reference>
<reference key="8">
    <citation type="journal article" date="2011" name="BMC Syst. Biol.">
        <title>Initial characterization of the human central proteome.</title>
        <authorList>
            <person name="Burkard T.R."/>
            <person name="Planyavsky M."/>
            <person name="Kaupe I."/>
            <person name="Breitwieser F.P."/>
            <person name="Buerckstuemmer T."/>
            <person name="Bennett K.L."/>
            <person name="Superti-Furga G."/>
            <person name="Colinge J."/>
        </authorList>
    </citation>
    <scope>IDENTIFICATION BY MASS SPECTROMETRY [LARGE SCALE ANALYSIS]</scope>
</reference>
<reference key="9">
    <citation type="journal article" date="2011" name="FEBS Lett.">
        <title>NDUFB7 and NDUFA8 are located at the intermembrane surface of complex I.</title>
        <authorList>
            <person name="Szklarczyk R."/>
            <person name="Wanschers B.F."/>
            <person name="Nabuurs S.B."/>
            <person name="Nouws J."/>
            <person name="Nijtmans L.G."/>
            <person name="Huynen M.A."/>
        </authorList>
    </citation>
    <scope>SUBCELLULAR LOCATION</scope>
    <scope>SUBUNIT</scope>
    <scope>PROBABLE DISULFIDE BOND</scope>
</reference>
<reference key="10">
    <citation type="journal article" date="2013" name="Mol. Biol. Cell">
        <title>Protein import and oxidative folding in the mitochondrial intermembrane space of intact mammalian cells.</title>
        <authorList>
            <person name="Fischer M."/>
            <person name="Horn S."/>
            <person name="Belkacemi A."/>
            <person name="Kojer K."/>
            <person name="Petrungaro C."/>
            <person name="Habich M."/>
            <person name="Ali M."/>
            <person name="Kuettner V."/>
            <person name="Bien M."/>
            <person name="Kauff F."/>
            <person name="Dengjel J."/>
            <person name="Herrmann J.M."/>
            <person name="Riemer J."/>
        </authorList>
    </citation>
    <scope>SUBCELLULAR LOCATION</scope>
    <scope>DISULFIDE BONDS</scope>
</reference>
<reference key="11">
    <citation type="journal article" date="2014" name="J. Proteomics">
        <title>An enzyme assisted RP-RPLC approach for in-depth analysis of human liver phosphoproteome.</title>
        <authorList>
            <person name="Bian Y."/>
            <person name="Song C."/>
            <person name="Cheng K."/>
            <person name="Dong M."/>
            <person name="Wang F."/>
            <person name="Huang J."/>
            <person name="Sun D."/>
            <person name="Wang L."/>
            <person name="Ye M."/>
            <person name="Zou H."/>
        </authorList>
    </citation>
    <scope>IDENTIFICATION BY MASS SPECTROMETRY [LARGE SCALE ANALYSIS]</scope>
    <source>
        <tissue>Liver</tissue>
    </source>
</reference>
<reference key="12">
    <citation type="journal article" date="2015" name="Proteomics">
        <title>N-terminome analysis of the human mitochondrial proteome.</title>
        <authorList>
            <person name="Vaca Jacome A.S."/>
            <person name="Rabilloud T."/>
            <person name="Schaeffer-Reiss C."/>
            <person name="Rompais M."/>
            <person name="Ayoub D."/>
            <person name="Lane L."/>
            <person name="Bairoch A."/>
            <person name="Van Dorsselaer A."/>
            <person name="Carapito C."/>
        </authorList>
    </citation>
    <scope>CLEAVAGE OF INITIATOR METHIONINE [LARGE SCALE ANALYSIS]</scope>
    <scope>IDENTIFICATION BY MASS SPECTROMETRY [LARGE SCALE ANALYSIS]</scope>
</reference>
<reference key="13">
    <citation type="journal article" date="2016" name="Nature">
        <title>Accessory subunits are integral for assembly and function of human mitochondrial complex I.</title>
        <authorList>
            <person name="Stroud D.A."/>
            <person name="Surgenor E.E."/>
            <person name="Formosa L.E."/>
            <person name="Reljic B."/>
            <person name="Frazier A.E."/>
            <person name="Dibley M.G."/>
            <person name="Osellame L.D."/>
            <person name="Stait T."/>
            <person name="Beilharz T.H."/>
            <person name="Thorburn D.R."/>
            <person name="Salim A."/>
            <person name="Ryan M.T."/>
        </authorList>
    </citation>
    <scope>FUNCTION</scope>
    <scope>IDENTIFICATION IN THE NADH-UBIQUINONE OXIDOREDUCTASE COMPLEX</scope>
</reference>
<reference key="14">
    <citation type="journal article" date="2006" name="Science">
        <title>The consensus coding sequences of human breast and colorectal cancers.</title>
        <authorList>
            <person name="Sjoeblom T."/>
            <person name="Jones S."/>
            <person name="Wood L.D."/>
            <person name="Parsons D.W."/>
            <person name="Lin J."/>
            <person name="Barber T.D."/>
            <person name="Mandelker D."/>
            <person name="Leary R.J."/>
            <person name="Ptak J."/>
            <person name="Silliman N."/>
            <person name="Szabo S."/>
            <person name="Buckhaults P."/>
            <person name="Farrell C."/>
            <person name="Meeh P."/>
            <person name="Markowitz S.D."/>
            <person name="Willis J."/>
            <person name="Dawson D."/>
            <person name="Willson J.K.V."/>
            <person name="Gazdar A.F."/>
            <person name="Hartigan J."/>
            <person name="Wu L."/>
            <person name="Liu C."/>
            <person name="Parmigiani G."/>
            <person name="Park B.H."/>
            <person name="Bachman K.E."/>
            <person name="Papadopoulos N."/>
            <person name="Vogelstein B."/>
            <person name="Kinzler K.W."/>
            <person name="Velculescu V.E."/>
        </authorList>
    </citation>
    <scope>VARIANT [LARGE SCALE ANALYSIS] HIS-140</scope>
</reference>
<reference key="15">
    <citation type="journal article" date="2020" name="Clin. Genet.">
        <title>A homozygous variant in NDUFA8 is associated with developmental delay, microcephaly, and epilepsy due to mitochondrial complex I deficiency.</title>
        <authorList>
            <person name="Yatsuka Y."/>
            <person name="Kishita Y."/>
            <person name="Formosa L.E."/>
            <person name="Shimura M."/>
            <person name="Nozaki F."/>
            <person name="Fujii T."/>
            <person name="Nitta K.R."/>
            <person name="Ohtake A."/>
            <person name="Murayama K."/>
            <person name="Ryan M.T."/>
            <person name="Okazaki Y."/>
        </authorList>
    </citation>
    <scope>INVOLVEMENT IN MC1DN37</scope>
    <scope>VARIANT MC1DN37 CYS-47</scope>
    <scope>CHARACTERIZATION OF VARIANT MC1DN37 CYS-47</scope>
    <scope>FUNCTION</scope>
</reference>
<reference key="16">
    <citation type="journal article" date="2020" name="Mol. Genet. Metab.">
        <title>Biallelic mutations in NDUFA8 cause complex I deficiency in two siblings with favorable clinical evolution.</title>
        <authorList>
            <person name="Tort F."/>
            <person name="Barredo E."/>
            <person name="Parthasarathy R."/>
            <person name="Ugarteburu O."/>
            <person name="Ferrer-Cortes X."/>
            <person name="Garcia-Villoria J."/>
            <person name="Gort L."/>
            <person name="Gonzalez-Quintana A."/>
            <person name="Martin M.A."/>
            <person name="Fernandez-Vizarra E."/>
            <person name="Zeviani M."/>
            <person name="Ribes A."/>
        </authorList>
    </citation>
    <scope>VARIANT MC1DN37 LEU-98</scope>
    <scope>CHARACTERIZATION OF VARIANT MC1DN37 LEU-98</scope>
    <scope>FUNCTION</scope>
</reference>
<comment type="function">
    <text evidence="7 8 9">Accessory subunit of the mitochondrial membrane respiratory chain NADH dehydrogenase (Complex I), that is believed not to be involved in catalysis (PubMed:27626371, PubMed:32385911, PubMed:33153867). Complex I functions in the transfer of electrons from NADH to the respiratory chain (PubMed:27626371). The immediate electron acceptor for the enzyme is believed to be ubiquinone (PubMed:27626371).</text>
</comment>
<comment type="subunit">
    <text evidence="3 5 7">Complex I is composed of 45 different subunits.</text>
</comment>
<comment type="interaction">
    <interactant intactId="EBI-1237250">
        <id>P51970</id>
    </interactant>
    <interactant intactId="EBI-10976677">
        <id>G5E9A7</id>
        <label>DMWD</label>
    </interactant>
    <organismsDiffer>false</organismsDiffer>
    <experiments>3</experiments>
</comment>
<comment type="interaction">
    <interactant intactId="EBI-1237250">
        <id>P51970</id>
    </interactant>
    <interactant intactId="EBI-1224896">
        <id>O75489</id>
        <label>NDUFS3</label>
    </interactant>
    <organismsDiffer>false</organismsDiffer>
    <experiments>5</experiments>
</comment>
<comment type="interaction">
    <interactant intactId="EBI-1237250">
        <id>P51970</id>
    </interactant>
    <interactant intactId="EBI-5235340">
        <id>Q7Z699</id>
        <label>SPRED1</label>
    </interactant>
    <organismsDiffer>false</organismsDiffer>
    <experiments>3</experiments>
</comment>
<comment type="subcellular location">
    <subcellularLocation>
        <location evidence="5">Mitochondrion inner membrane</location>
        <topology evidence="5">Peripheral membrane protein</topology>
    </subcellularLocation>
    <subcellularLocation>
        <location evidence="5">Mitochondrion intermembrane space</location>
    </subcellularLocation>
    <subcellularLocation>
        <location evidence="6">Mitochondrion</location>
    </subcellularLocation>
</comment>
<comment type="domain">
    <text evidence="12">Contains four C-X9-C motifs that are predicted to form a helix-coil-helix structure, permitting the formation of intramolecular disulfide bonds.</text>
</comment>
<comment type="PTM">
    <text evidence="5">May contain intrachain disulfide bonds, as evidenced by its electrophoretic mobility under reducing vs non-reducing conditions.</text>
</comment>
<comment type="disease" evidence="8 9">
    <disease id="DI-06080">
        <name>Mitochondrial complex I deficiency, nuclear type 37</name>
        <acronym>MC1DN37</acronym>
        <description>A form of mitochondrial complex I deficiency, the most common biochemical signature of mitochondrial disorders, a group of highly heterogeneous conditions characterized by defective oxidative phosphorylation, which collectively affects 1 in 5-10000 live births. Clinical disorders have variable severity, ranging from lethal neonatal disease to adult-onset neurodegenerative disorders. Phenotypes include macrocephaly with progressive leukodystrophy, non-specific encephalopathy, cardiomyopathy, myopathy, liver disease, Leigh syndrome, Leber hereditary optic neuropathy, and some forms of Parkinson disease. MC1DN37 features include developmental delay, cerebral atrophy, epilepsy, growth retardation, congenital myopathy with disproportion of fibers, and severely decreased activity of complex I. MC1DN37 transmission pattern is consistent with autosomal recessive inheritance.</description>
        <dbReference type="MIM" id="619272"/>
    </disease>
    <text>The disease is caused by variants affecting the gene represented in this entry.</text>
</comment>
<comment type="similarity">
    <text evidence="11">Belongs to the complex I NDUFA8 subunit family.</text>
</comment>
<evidence type="ECO:0000255" key="1">
    <source>
        <dbReference type="PROSITE-ProRule" id="PRU01150"/>
    </source>
</evidence>
<evidence type="ECO:0000256" key="2">
    <source>
        <dbReference type="SAM" id="MobiDB-lite"/>
    </source>
</evidence>
<evidence type="ECO:0000269" key="3">
    <source>
    </source>
</evidence>
<evidence type="ECO:0000269" key="4">
    <source>
    </source>
</evidence>
<evidence type="ECO:0000269" key="5">
    <source>
    </source>
</evidence>
<evidence type="ECO:0000269" key="6">
    <source>
    </source>
</evidence>
<evidence type="ECO:0000269" key="7">
    <source>
    </source>
</evidence>
<evidence type="ECO:0000269" key="8">
    <source>
    </source>
</evidence>
<evidence type="ECO:0000269" key="9">
    <source>
    </source>
</evidence>
<evidence type="ECO:0000269" key="10">
    <source>
    </source>
</evidence>
<evidence type="ECO:0000305" key="11"/>
<evidence type="ECO:0000305" key="12">
    <source>
    </source>
</evidence>
<evidence type="ECO:0000305" key="13">
    <source>
    </source>
</evidence>
<evidence type="ECO:0007744" key="14">
    <source>
    </source>
</evidence>
<accession>P51970</accession>
<accession>B1AM93</accession>
<accession>Q9Y6N0</accession>
<gene>
    <name type="primary">NDUFA8</name>
</gene>
<dbReference type="EMBL" id="AF044953">
    <property type="protein sequence ID" value="AAD42056.1"/>
    <property type="molecule type" value="mRNA"/>
</dbReference>
<dbReference type="EMBL" id="AK314135">
    <property type="protein sequence ID" value="BAG36825.1"/>
    <property type="molecule type" value="mRNA"/>
</dbReference>
<dbReference type="EMBL" id="AL162423">
    <property type="status" value="NOT_ANNOTATED_CDS"/>
    <property type="molecule type" value="Genomic_DNA"/>
</dbReference>
<dbReference type="EMBL" id="CH471090">
    <property type="protein sequence ID" value="EAW87511.1"/>
    <property type="molecule type" value="Genomic_DNA"/>
</dbReference>
<dbReference type="EMBL" id="BC001016">
    <property type="protein sequence ID" value="AAH01016.1"/>
    <property type="molecule type" value="mRNA"/>
</dbReference>
<dbReference type="CCDS" id="CCDS6835.1"/>
<dbReference type="RefSeq" id="NP_055037.1">
    <property type="nucleotide sequence ID" value="NM_014222.3"/>
</dbReference>
<dbReference type="PDB" id="5XTC">
    <property type="method" value="EM"/>
    <property type="resolution" value="3.70 A"/>
    <property type="chains" value="u=4-172"/>
</dbReference>
<dbReference type="PDB" id="5XTD">
    <property type="method" value="EM"/>
    <property type="resolution" value="3.70 A"/>
    <property type="chains" value="u=4-172"/>
</dbReference>
<dbReference type="PDB" id="5XTH">
    <property type="method" value="EM"/>
    <property type="resolution" value="3.90 A"/>
    <property type="chains" value="u=4-172"/>
</dbReference>
<dbReference type="PDB" id="5XTI">
    <property type="method" value="EM"/>
    <property type="resolution" value="17.40 A"/>
    <property type="chains" value="Bu/u=4-172"/>
</dbReference>
<dbReference type="PDBsum" id="5XTC"/>
<dbReference type="PDBsum" id="5XTD"/>
<dbReference type="PDBsum" id="5XTH"/>
<dbReference type="PDBsum" id="5XTI"/>
<dbReference type="SMR" id="P51970"/>
<dbReference type="BioGRID" id="110782">
    <property type="interactions" value="200"/>
</dbReference>
<dbReference type="ComplexPortal" id="CPX-577">
    <property type="entry name" value="Mitochondrial respiratory chain complex I"/>
</dbReference>
<dbReference type="CORUM" id="P51970"/>
<dbReference type="FunCoup" id="P51970">
    <property type="interactions" value="1524"/>
</dbReference>
<dbReference type="IntAct" id="P51970">
    <property type="interactions" value="84"/>
</dbReference>
<dbReference type="MINT" id="P51970"/>
<dbReference type="STRING" id="9606.ENSP00000362873"/>
<dbReference type="BindingDB" id="P51970"/>
<dbReference type="ChEMBL" id="CHEMBL2363065"/>
<dbReference type="DrugBank" id="DB00157">
    <property type="generic name" value="NADH"/>
</dbReference>
<dbReference type="DrugCentral" id="P51970"/>
<dbReference type="GlyGen" id="P51970">
    <property type="glycosylation" value="1 site, 1 O-linked glycan (1 site)"/>
</dbReference>
<dbReference type="iPTMnet" id="P51970"/>
<dbReference type="PhosphoSitePlus" id="P51970"/>
<dbReference type="SwissPalm" id="P51970"/>
<dbReference type="BioMuta" id="NDUFA8"/>
<dbReference type="DMDM" id="8039804"/>
<dbReference type="jPOST" id="P51970"/>
<dbReference type="MassIVE" id="P51970"/>
<dbReference type="PaxDb" id="9606-ENSP00000362873"/>
<dbReference type="PeptideAtlas" id="P51970"/>
<dbReference type="ProteomicsDB" id="56464"/>
<dbReference type="Pumba" id="P51970"/>
<dbReference type="TopDownProteomics" id="P51970"/>
<dbReference type="Antibodypedia" id="30251">
    <property type="antibodies" value="221 antibodies from 31 providers"/>
</dbReference>
<dbReference type="DNASU" id="4702"/>
<dbReference type="Ensembl" id="ENST00000373768.4">
    <property type="protein sequence ID" value="ENSP00000362873.3"/>
    <property type="gene ID" value="ENSG00000119421.7"/>
</dbReference>
<dbReference type="GeneID" id="4702"/>
<dbReference type="KEGG" id="hsa:4702"/>
<dbReference type="MANE-Select" id="ENST00000373768.4">
    <property type="protein sequence ID" value="ENSP00000362873.3"/>
    <property type="RefSeq nucleotide sequence ID" value="NM_014222.3"/>
    <property type="RefSeq protein sequence ID" value="NP_055037.1"/>
</dbReference>
<dbReference type="UCSC" id="uc004blv.4">
    <property type="organism name" value="human"/>
</dbReference>
<dbReference type="AGR" id="HGNC:7692"/>
<dbReference type="CTD" id="4702"/>
<dbReference type="DisGeNET" id="4702"/>
<dbReference type="GeneCards" id="NDUFA8"/>
<dbReference type="HGNC" id="HGNC:7692">
    <property type="gene designation" value="NDUFA8"/>
</dbReference>
<dbReference type="HPA" id="ENSG00000119421">
    <property type="expression patterns" value="Tissue enhanced (heart)"/>
</dbReference>
<dbReference type="MalaCards" id="NDUFA8"/>
<dbReference type="MIM" id="603359">
    <property type="type" value="gene"/>
</dbReference>
<dbReference type="MIM" id="619272">
    <property type="type" value="phenotype"/>
</dbReference>
<dbReference type="neXtProt" id="NX_P51970"/>
<dbReference type="OpenTargets" id="ENSG00000119421"/>
<dbReference type="PharmGKB" id="PA31498"/>
<dbReference type="VEuPathDB" id="HostDB:ENSG00000119421"/>
<dbReference type="eggNOG" id="KOG3458">
    <property type="taxonomic scope" value="Eukaryota"/>
</dbReference>
<dbReference type="GeneTree" id="ENSGT00390000008938"/>
<dbReference type="HOGENOM" id="CLU_081931_2_1_1"/>
<dbReference type="InParanoid" id="P51970"/>
<dbReference type="OMA" id="FRTHWQC"/>
<dbReference type="OrthoDB" id="276296at2759"/>
<dbReference type="PAN-GO" id="P51970">
    <property type="GO annotations" value="1 GO annotation based on evolutionary models"/>
</dbReference>
<dbReference type="PhylomeDB" id="P51970"/>
<dbReference type="TreeFam" id="TF105633"/>
<dbReference type="BioCyc" id="MetaCyc:HS04297-MONOMER"/>
<dbReference type="PathwayCommons" id="P51970"/>
<dbReference type="Reactome" id="R-HSA-611105">
    <property type="pathway name" value="Respiratory electron transport"/>
</dbReference>
<dbReference type="Reactome" id="R-HSA-6799198">
    <property type="pathway name" value="Complex I biogenesis"/>
</dbReference>
<dbReference type="SignaLink" id="P51970"/>
<dbReference type="SIGNOR" id="P51970"/>
<dbReference type="BioGRID-ORCS" id="4702">
    <property type="hits" value="299 hits in 1169 CRISPR screens"/>
</dbReference>
<dbReference type="ChiTaRS" id="NDUFA8">
    <property type="organism name" value="human"/>
</dbReference>
<dbReference type="GeneWiki" id="NDUFA8"/>
<dbReference type="GenomeRNAi" id="4702"/>
<dbReference type="Pharos" id="P51970">
    <property type="development level" value="Tclin"/>
</dbReference>
<dbReference type="PRO" id="PR:P51970"/>
<dbReference type="Proteomes" id="UP000005640">
    <property type="component" value="Chromosome 9"/>
</dbReference>
<dbReference type="RNAct" id="P51970">
    <property type="molecule type" value="protein"/>
</dbReference>
<dbReference type="Bgee" id="ENSG00000119421">
    <property type="expression patterns" value="Expressed in apex of heart and 199 other cell types or tissues"/>
</dbReference>
<dbReference type="GO" id="GO:0005743">
    <property type="term" value="C:mitochondrial inner membrane"/>
    <property type="evidence" value="ECO:0000314"/>
    <property type="project" value="ComplexPortal"/>
</dbReference>
<dbReference type="GO" id="GO:0005758">
    <property type="term" value="C:mitochondrial intermembrane space"/>
    <property type="evidence" value="ECO:0000314"/>
    <property type="project" value="UniProtKB"/>
</dbReference>
<dbReference type="GO" id="GO:0005739">
    <property type="term" value="C:mitochondrion"/>
    <property type="evidence" value="ECO:0000314"/>
    <property type="project" value="UniProtKB"/>
</dbReference>
<dbReference type="GO" id="GO:0045271">
    <property type="term" value="C:respiratory chain complex I"/>
    <property type="evidence" value="ECO:0000314"/>
    <property type="project" value="UniProtKB"/>
</dbReference>
<dbReference type="GO" id="GO:0008137">
    <property type="term" value="F:NADH dehydrogenase (ubiquinone) activity"/>
    <property type="evidence" value="ECO:0000304"/>
    <property type="project" value="ProtInc"/>
</dbReference>
<dbReference type="GO" id="GO:0044877">
    <property type="term" value="F:protein-containing complex binding"/>
    <property type="evidence" value="ECO:0000314"/>
    <property type="project" value="MGI"/>
</dbReference>
<dbReference type="GO" id="GO:0009060">
    <property type="term" value="P:aerobic respiration"/>
    <property type="evidence" value="ECO:0000303"/>
    <property type="project" value="ComplexPortal"/>
</dbReference>
<dbReference type="GO" id="GO:0006120">
    <property type="term" value="P:mitochondrial electron transport, NADH to ubiquinone"/>
    <property type="evidence" value="ECO:0000303"/>
    <property type="project" value="UniProtKB"/>
</dbReference>
<dbReference type="GO" id="GO:0042776">
    <property type="term" value="P:proton motive force-driven mitochondrial ATP synthesis"/>
    <property type="evidence" value="ECO:0000303"/>
    <property type="project" value="ComplexPortal"/>
</dbReference>
<dbReference type="InterPro" id="IPR010625">
    <property type="entry name" value="CHCH"/>
</dbReference>
<dbReference type="InterPro" id="IPR016680">
    <property type="entry name" value="NDUFA8"/>
</dbReference>
<dbReference type="PANTHER" id="PTHR13344:SF0">
    <property type="entry name" value="NADH DEHYDROGENASE [UBIQUINONE] 1 ALPHA SUBCOMPLEX SUBUNIT 8"/>
    <property type="match status" value="1"/>
</dbReference>
<dbReference type="PANTHER" id="PTHR13344">
    <property type="entry name" value="NADH-UBIQUINONE OXIDOREDUCTASE"/>
    <property type="match status" value="1"/>
</dbReference>
<dbReference type="Pfam" id="PF06747">
    <property type="entry name" value="CHCH"/>
    <property type="match status" value="1"/>
</dbReference>
<dbReference type="PIRSF" id="PIRSF017016">
    <property type="entry name" value="NDUA8"/>
    <property type="match status" value="1"/>
</dbReference>
<dbReference type="PROSITE" id="PS51808">
    <property type="entry name" value="CHCH"/>
    <property type="match status" value="2"/>
</dbReference>
<organism>
    <name type="scientific">Homo sapiens</name>
    <name type="common">Human</name>
    <dbReference type="NCBI Taxonomy" id="9606"/>
    <lineage>
        <taxon>Eukaryota</taxon>
        <taxon>Metazoa</taxon>
        <taxon>Chordata</taxon>
        <taxon>Craniata</taxon>
        <taxon>Vertebrata</taxon>
        <taxon>Euteleostomi</taxon>
        <taxon>Mammalia</taxon>
        <taxon>Eutheria</taxon>
        <taxon>Euarchontoglires</taxon>
        <taxon>Primates</taxon>
        <taxon>Haplorrhini</taxon>
        <taxon>Catarrhini</taxon>
        <taxon>Hominidae</taxon>
        <taxon>Homo</taxon>
    </lineage>
</organism>
<protein>
    <recommendedName>
        <fullName>NADH dehydrogenase [ubiquinone] 1 alpha subcomplex subunit 8</fullName>
    </recommendedName>
    <alternativeName>
        <fullName>Complex I-19kD</fullName>
        <shortName>CI-19kD</shortName>
    </alternativeName>
    <alternativeName>
        <fullName>Complex I-PGIV</fullName>
        <shortName>CI-PGIV</shortName>
    </alternativeName>
    <alternativeName>
        <fullName>NADH-ubiquinone oxidoreductase 19 kDa subunit</fullName>
    </alternativeName>
</protein>
<sequence length="172" mass="20105">MPGIVELPTLEELKVDEVKISSAVLKAAAHHYGAQCDKPNKEFMLCRWEEKDPRRCLEEGKLVNKCALDFFRQIKRHCAEPFTEYWTCIDYTGQQLFRHCRKQQAKFDECVLDKLGWVRPDLGELSKVTKVKTDRPLPENPYHSRPRPDPSPEIEGDLQPATHGSRFYFWTK</sequence>